<comment type="function">
    <text evidence="1">Binds to 23S rRNA.</text>
</comment>
<comment type="subunit">
    <text evidence="1">Part of the 50S ribosomal subunit.</text>
</comment>
<comment type="subcellular location">
    <subcellularLocation>
        <location>Plastid</location>
        <location>Chloroplast</location>
    </subcellularLocation>
</comment>
<comment type="similarity">
    <text evidence="2">Belongs to the universal ribosomal protein uL23 family.</text>
</comment>
<protein>
    <recommendedName>
        <fullName evidence="2">Large ribosomal subunit protein uL23c</fullName>
    </recommendedName>
    <alternativeName>
        <fullName>50S ribosomal protein L23, chloroplastic</fullName>
    </alternativeName>
</protein>
<proteinExistence type="inferred from homology"/>
<geneLocation type="chloroplast"/>
<name>RK23_THAPS</name>
<evidence type="ECO:0000250" key="1"/>
<evidence type="ECO:0000305" key="2"/>
<organism>
    <name type="scientific">Thalassiosira pseudonana</name>
    <name type="common">Marine diatom</name>
    <name type="synonym">Cyclotella nana</name>
    <dbReference type="NCBI Taxonomy" id="35128"/>
    <lineage>
        <taxon>Eukaryota</taxon>
        <taxon>Sar</taxon>
        <taxon>Stramenopiles</taxon>
        <taxon>Ochrophyta</taxon>
        <taxon>Bacillariophyta</taxon>
        <taxon>Coscinodiscophyceae</taxon>
        <taxon>Thalassiosirophycidae</taxon>
        <taxon>Thalassiosirales</taxon>
        <taxon>Thalassiosiraceae</taxon>
        <taxon>Thalassiosira</taxon>
    </lineage>
</organism>
<keyword id="KW-0150">Chloroplast</keyword>
<keyword id="KW-0934">Plastid</keyword>
<keyword id="KW-0687">Ribonucleoprotein</keyword>
<keyword id="KW-0689">Ribosomal protein</keyword>
<keyword id="KW-0694">RNA-binding</keyword>
<keyword id="KW-0699">rRNA-binding</keyword>
<feature type="chain" id="PRO_0000277158" description="Large ribosomal subunit protein uL23c">
    <location>
        <begin position="1"/>
        <end position="98"/>
    </location>
</feature>
<reference key="1">
    <citation type="journal article" date="2007" name="Mol. Genet. Genomics">
        <title>Chloroplast genomes of the diatoms Phaeodactylum tricornutum and Thalassiosira pseudonana: comparison with other plastid genomes of the red lineage.</title>
        <authorList>
            <person name="Oudot-Le Secq M.-P."/>
            <person name="Grimwood J."/>
            <person name="Shapiro H."/>
            <person name="Armbrust E.V."/>
            <person name="Bowler C."/>
            <person name="Green B.R."/>
        </authorList>
    </citation>
    <scope>NUCLEOTIDE SEQUENCE [LARGE SCALE GENOMIC DNA]</scope>
    <source>
        <strain>CCMP1335 / NEPCC58 / CCAP 1085/12</strain>
    </source>
</reference>
<accession>A0T0X4</accession>
<dbReference type="EMBL" id="EF067921">
    <property type="protein sequence ID" value="ABK20809.1"/>
    <property type="molecule type" value="Genomic_DNA"/>
</dbReference>
<dbReference type="RefSeq" id="YP_874586.1">
    <property type="nucleotide sequence ID" value="NC_008589.1"/>
</dbReference>
<dbReference type="SMR" id="A0T0X4"/>
<dbReference type="STRING" id="35128.A0T0X4"/>
<dbReference type="GeneID" id="4524749"/>
<dbReference type="InParanoid" id="A0T0X4"/>
<dbReference type="GO" id="GO:0009507">
    <property type="term" value="C:chloroplast"/>
    <property type="evidence" value="ECO:0007669"/>
    <property type="project" value="UniProtKB-SubCell"/>
</dbReference>
<dbReference type="GO" id="GO:1990904">
    <property type="term" value="C:ribonucleoprotein complex"/>
    <property type="evidence" value="ECO:0007669"/>
    <property type="project" value="UniProtKB-KW"/>
</dbReference>
<dbReference type="GO" id="GO:0005840">
    <property type="term" value="C:ribosome"/>
    <property type="evidence" value="ECO:0007669"/>
    <property type="project" value="UniProtKB-KW"/>
</dbReference>
<dbReference type="GO" id="GO:0019843">
    <property type="term" value="F:rRNA binding"/>
    <property type="evidence" value="ECO:0007669"/>
    <property type="project" value="UniProtKB-UniRule"/>
</dbReference>
<dbReference type="GO" id="GO:0003735">
    <property type="term" value="F:structural constituent of ribosome"/>
    <property type="evidence" value="ECO:0007669"/>
    <property type="project" value="InterPro"/>
</dbReference>
<dbReference type="GO" id="GO:0006412">
    <property type="term" value="P:translation"/>
    <property type="evidence" value="ECO:0007669"/>
    <property type="project" value="UniProtKB-UniRule"/>
</dbReference>
<dbReference type="FunFam" id="3.30.70.330:FF:000001">
    <property type="entry name" value="50S ribosomal protein L23"/>
    <property type="match status" value="1"/>
</dbReference>
<dbReference type="Gene3D" id="3.30.70.330">
    <property type="match status" value="1"/>
</dbReference>
<dbReference type="HAMAP" id="MF_01369_B">
    <property type="entry name" value="Ribosomal_uL23_B"/>
    <property type="match status" value="1"/>
</dbReference>
<dbReference type="InterPro" id="IPR012677">
    <property type="entry name" value="Nucleotide-bd_a/b_plait_sf"/>
</dbReference>
<dbReference type="InterPro" id="IPR013025">
    <property type="entry name" value="Ribosomal_uL23-like"/>
</dbReference>
<dbReference type="InterPro" id="IPR012678">
    <property type="entry name" value="Ribosomal_uL23/eL15/eS24_sf"/>
</dbReference>
<dbReference type="InterPro" id="IPR001014">
    <property type="entry name" value="Ribosomal_uL23_CS"/>
</dbReference>
<dbReference type="NCBIfam" id="NF004363">
    <property type="entry name" value="PRK05738.2-4"/>
    <property type="match status" value="1"/>
</dbReference>
<dbReference type="NCBIfam" id="NF004368">
    <property type="entry name" value="PRK05738.3-4"/>
    <property type="match status" value="1"/>
</dbReference>
<dbReference type="PANTHER" id="PTHR11620">
    <property type="entry name" value="60S RIBOSOMAL PROTEIN L23A"/>
    <property type="match status" value="1"/>
</dbReference>
<dbReference type="Pfam" id="PF00276">
    <property type="entry name" value="Ribosomal_L23"/>
    <property type="match status" value="1"/>
</dbReference>
<dbReference type="SUPFAM" id="SSF54189">
    <property type="entry name" value="Ribosomal proteins S24e, L23 and L15e"/>
    <property type="match status" value="1"/>
</dbReference>
<dbReference type="PROSITE" id="PS00050">
    <property type="entry name" value="RIBOSOMAL_L23"/>
    <property type="match status" value="1"/>
</dbReference>
<gene>
    <name type="primary">rpl23</name>
</gene>
<sequence>MVNSLDMNVIKYPIITDKATRLLANNQYSFIVSPKSDKPTIKAAIEYLFNVKVVKINTAHLPKKKKRIGQYLGWKAHYKKAIVTLSEGDTINLFAEEN</sequence>